<gene>
    <name type="ORF">MCYG_02918</name>
</gene>
<organism>
    <name type="scientific">Arthroderma otae (strain ATCC MYA-4605 / CBS 113480)</name>
    <name type="common">Microsporum canis</name>
    <dbReference type="NCBI Taxonomy" id="554155"/>
    <lineage>
        <taxon>Eukaryota</taxon>
        <taxon>Fungi</taxon>
        <taxon>Dikarya</taxon>
        <taxon>Ascomycota</taxon>
        <taxon>Pezizomycotina</taxon>
        <taxon>Eurotiomycetes</taxon>
        <taxon>Eurotiomycetidae</taxon>
        <taxon>Onygenales</taxon>
        <taxon>Arthrodermataceae</taxon>
        <taxon>Microsporum</taxon>
    </lineage>
</organism>
<proteinExistence type="inferred from homology"/>
<keyword id="KW-0224">Dipeptidase</keyword>
<keyword id="KW-1015">Disulfide bond</keyword>
<keyword id="KW-0325">Glycoprotein</keyword>
<keyword id="KW-0378">Hydrolase</keyword>
<keyword id="KW-0479">Metal-binding</keyword>
<keyword id="KW-0482">Metalloprotease</keyword>
<keyword id="KW-0645">Protease</keyword>
<keyword id="KW-1185">Reference proteome</keyword>
<keyword id="KW-0732">Signal</keyword>
<keyword id="KW-0862">Zinc</keyword>
<reference key="1">
    <citation type="journal article" date="2012" name="MBio">
        <title>Comparative genome analysis of Trichophyton rubrum and related dermatophytes reveals candidate genes involved in infection.</title>
        <authorList>
            <person name="Martinez D.A."/>
            <person name="Oliver B.G."/>
            <person name="Graeser Y."/>
            <person name="Goldberg J.M."/>
            <person name="Li W."/>
            <person name="Martinez-Rossi N.M."/>
            <person name="Monod M."/>
            <person name="Shelest E."/>
            <person name="Barton R.C."/>
            <person name="Birch E."/>
            <person name="Brakhage A.A."/>
            <person name="Chen Z."/>
            <person name="Gurr S.J."/>
            <person name="Heiman D."/>
            <person name="Heitman J."/>
            <person name="Kosti I."/>
            <person name="Rossi A."/>
            <person name="Saif S."/>
            <person name="Samalova M."/>
            <person name="Saunders C.W."/>
            <person name="Shea T."/>
            <person name="Summerbell R.C."/>
            <person name="Xu J."/>
            <person name="Young S."/>
            <person name="Zeng Q."/>
            <person name="Birren B.W."/>
            <person name="Cuomo C.A."/>
            <person name="White T.C."/>
        </authorList>
    </citation>
    <scope>NUCLEOTIDE SEQUENCE [LARGE SCALE GENOMIC DNA]</scope>
    <source>
        <strain>ATCC MYA-4605 / CBS 113480</strain>
    </source>
</reference>
<accession>C5FK77</accession>
<sequence length="427" mass="47242">MAPERRSRLSDAGILVSLLALTSLVPVQAAVTTSKPDYAKRAERVLRSTPLIDGHNDLPFAIRRSTHDQIYDGKVPFETALKGQTDLPRMRKGRMGGQFWSVYVGCPSDPNTPIDFPTFATRDTLEQIDVARRLVDKYSKDLMYCDNPACAKKAFREGKIGSFIGIEGGHQVGSSIAALRQAFYAGARYMTLTHNCDNAWATAASTVRAGKPDLGMTEFGPALIKEMNRLGMLVDLSHVSHQTMRDVLKVTKAPVIFSHSSAYAVSKHLRNVPDDVLKTVAKNNGVVMVTFVRSFVNIDNPDSVTVDDIVKHIFHIAEVAGWDHVGLGGDYDGTTELPKGLEDVSKYPYLIEKVLEHGATEEQARKLIGENILRVWTEVEKIGKRIQNSGALPVEEVWQGRNWTQSLTKRSTFIPTESPTQLEFGCD</sequence>
<protein>
    <recommendedName>
        <fullName>Putative dipeptidase MCYG_02918</fullName>
        <ecNumber evidence="3">3.4.13.19</ecNumber>
    </recommendedName>
</protein>
<dbReference type="EC" id="3.4.13.19" evidence="3"/>
<dbReference type="EMBL" id="DS995703">
    <property type="protein sequence ID" value="EEQ30099.1"/>
    <property type="molecule type" value="Genomic_DNA"/>
</dbReference>
<dbReference type="RefSeq" id="XP_002847412.1">
    <property type="nucleotide sequence ID" value="XM_002847366.1"/>
</dbReference>
<dbReference type="SMR" id="C5FK77"/>
<dbReference type="STRING" id="554155.C5FK77"/>
<dbReference type="GeneID" id="9224858"/>
<dbReference type="VEuPathDB" id="FungiDB:MCYG_02918"/>
<dbReference type="eggNOG" id="KOG4127">
    <property type="taxonomic scope" value="Eukaryota"/>
</dbReference>
<dbReference type="HOGENOM" id="CLU_031404_4_0_1"/>
<dbReference type="OMA" id="WSGNVLR"/>
<dbReference type="OrthoDB" id="445695at2759"/>
<dbReference type="Proteomes" id="UP000002035">
    <property type="component" value="Unassembled WGS sequence"/>
</dbReference>
<dbReference type="GO" id="GO:0046872">
    <property type="term" value="F:metal ion binding"/>
    <property type="evidence" value="ECO:0007669"/>
    <property type="project" value="UniProtKB-KW"/>
</dbReference>
<dbReference type="GO" id="GO:0070573">
    <property type="term" value="F:metallodipeptidase activity"/>
    <property type="evidence" value="ECO:0007669"/>
    <property type="project" value="InterPro"/>
</dbReference>
<dbReference type="GO" id="GO:0006508">
    <property type="term" value="P:proteolysis"/>
    <property type="evidence" value="ECO:0007669"/>
    <property type="project" value="UniProtKB-KW"/>
</dbReference>
<dbReference type="CDD" id="cd01301">
    <property type="entry name" value="rDP_like"/>
    <property type="match status" value="1"/>
</dbReference>
<dbReference type="Gene3D" id="3.20.20.140">
    <property type="entry name" value="Metal-dependent hydrolases"/>
    <property type="match status" value="1"/>
</dbReference>
<dbReference type="InterPro" id="IPR032466">
    <property type="entry name" value="Metal_Hydrolase"/>
</dbReference>
<dbReference type="InterPro" id="IPR008257">
    <property type="entry name" value="Pept_M19"/>
</dbReference>
<dbReference type="PANTHER" id="PTHR10443:SF12">
    <property type="entry name" value="DIPEPTIDASE"/>
    <property type="match status" value="1"/>
</dbReference>
<dbReference type="PANTHER" id="PTHR10443">
    <property type="entry name" value="MICROSOMAL DIPEPTIDASE"/>
    <property type="match status" value="1"/>
</dbReference>
<dbReference type="Pfam" id="PF01244">
    <property type="entry name" value="Peptidase_M19"/>
    <property type="match status" value="1"/>
</dbReference>
<dbReference type="SUPFAM" id="SSF51556">
    <property type="entry name" value="Metallo-dependent hydrolases"/>
    <property type="match status" value="1"/>
</dbReference>
<dbReference type="PROSITE" id="PS51365">
    <property type="entry name" value="RENAL_DIPEPTIDASE_2"/>
    <property type="match status" value="1"/>
</dbReference>
<name>DPEP1_ARTOC</name>
<comment type="function">
    <text evidence="1">Hydrolyzes a wide range of dipeptides.</text>
</comment>
<comment type="catalytic activity">
    <reaction evidence="3">
        <text>an L-aminoacyl-L-amino acid + H2O = 2 an L-alpha-amino acid</text>
        <dbReference type="Rhea" id="RHEA:48940"/>
        <dbReference type="ChEBI" id="CHEBI:15377"/>
        <dbReference type="ChEBI" id="CHEBI:59869"/>
        <dbReference type="ChEBI" id="CHEBI:77460"/>
        <dbReference type="EC" id="3.4.13.19"/>
    </reaction>
</comment>
<comment type="cofactor">
    <cofactor evidence="3">
        <name>Zn(2+)</name>
        <dbReference type="ChEBI" id="CHEBI:29105"/>
    </cofactor>
</comment>
<comment type="similarity">
    <text evidence="3">Belongs to the metallo-dependent hydrolases superfamily. Peptidase M19 family.</text>
</comment>
<evidence type="ECO:0000250" key="1"/>
<evidence type="ECO:0000255" key="2"/>
<evidence type="ECO:0000255" key="3">
    <source>
        <dbReference type="PROSITE-ProRule" id="PRU10073"/>
    </source>
</evidence>
<feature type="signal peptide" evidence="2">
    <location>
        <begin position="1"/>
        <end position="29"/>
    </location>
</feature>
<feature type="chain" id="PRO_0000411212" description="Putative dipeptidase MCYG_02918">
    <location>
        <begin position="30"/>
        <end position="427"/>
    </location>
</feature>
<feature type="binding site" evidence="3">
    <location>
        <position position="55"/>
    </location>
    <ligand>
        <name>Zn(2+)</name>
        <dbReference type="ChEBI" id="CHEBI:29105"/>
        <label>1</label>
        <note>catalytic</note>
    </ligand>
</feature>
<feature type="binding site" evidence="3">
    <location>
        <position position="57"/>
    </location>
    <ligand>
        <name>Zn(2+)</name>
        <dbReference type="ChEBI" id="CHEBI:29105"/>
        <label>1</label>
        <note>catalytic</note>
    </ligand>
</feature>
<feature type="binding site" evidence="3">
    <location>
        <position position="167"/>
    </location>
    <ligand>
        <name>Zn(2+)</name>
        <dbReference type="ChEBI" id="CHEBI:29105"/>
        <label>1</label>
        <note>catalytic</note>
    </ligand>
</feature>
<feature type="binding site" evidence="3">
    <location>
        <position position="167"/>
    </location>
    <ligand>
        <name>Zn(2+)</name>
        <dbReference type="ChEBI" id="CHEBI:29105"/>
        <label>2</label>
        <note>catalytic</note>
    </ligand>
</feature>
<feature type="binding site" evidence="3">
    <location>
        <position position="194"/>
    </location>
    <ligand>
        <name>substrate</name>
    </ligand>
</feature>
<feature type="binding site" evidence="3">
    <location>
        <position position="238"/>
    </location>
    <ligand>
        <name>Zn(2+)</name>
        <dbReference type="ChEBI" id="CHEBI:29105"/>
        <label>2</label>
        <note>catalytic</note>
    </ligand>
</feature>
<feature type="binding site" evidence="3">
    <location>
        <position position="259"/>
    </location>
    <ligand>
        <name>Zn(2+)</name>
        <dbReference type="ChEBI" id="CHEBI:29105"/>
        <label>2</label>
        <note>catalytic</note>
    </ligand>
</feature>
<feature type="binding site" evidence="3">
    <location>
        <position position="270"/>
    </location>
    <ligand>
        <name>substrate</name>
    </ligand>
</feature>
<feature type="binding site" evidence="3">
    <location>
        <position position="330"/>
    </location>
    <ligand>
        <name>substrate</name>
    </ligand>
</feature>
<feature type="glycosylation site" description="N-linked (GlcNAc...) asparagine" evidence="2">
    <location>
        <position position="402"/>
    </location>
</feature>
<feature type="disulfide bond" evidence="3">
    <location>
        <begin position="106"/>
        <end position="196"/>
    </location>
</feature>